<protein>
    <recommendedName>
        <fullName>Uncharacterized PPE family protein PPE3</fullName>
    </recommendedName>
</protein>
<comment type="similarity">
    <text evidence="2">Belongs to the mycobacterial PPE family.</text>
</comment>
<comment type="sequence caution" evidence="2">
    <conflict type="erroneous initiation">
        <sequence resource="EMBL-CDS" id="AAK44516"/>
    </conflict>
</comment>
<gene>
    <name type="primary">PPE3</name>
    <name type="ordered locus">MT0292</name>
</gene>
<sequence>MTLWMASPPEVHSALLSSGPGPGSVLSAAGVWSSLSAEYAAVADELIGLLGAVQTGAWQGPSAAAYVAAHAPYLAWLMRASETSAEAAARHETVAAAYTTAVAAMPTLVELAANHTLHGVLVATNFFGINTIPIALNEADYARMWTQAASTMATYQAVAEAAVASAPQTTPAPPILAAEAADDDHDHDHDHGGEPTPLDYLVAEILRIISGGRLIWDPAEGTMNGIPFEDYTDAAQPIWWVVRAIEFSKDFETFVQELFVNPVEAFQFYFELLLFDYPTHIVQIVEALSQSPQLLAVALGSVISNLGAVTGFAGLSGLAGMQPAAIPALAPVAAAPPTLPAVAMAPTMAAPGAAVASAAAPASAPAASTVASATPAPPPAPGAAGFGYPYAIAPPGIGFGSGMSASASAQRKAPQPDSAAAAAAAAAVRDQARARRRRRVTRRGYGDEFMDMNIDVDPDWGPPPGEDPVTSTVASDRGAGHLGFAGTARREAVADAAGMTTLAGDDFGDGPTTPMVPGSWDPDRDAPGSAEPGDRG</sequence>
<evidence type="ECO:0000256" key="1">
    <source>
        <dbReference type="SAM" id="MobiDB-lite"/>
    </source>
</evidence>
<evidence type="ECO:0000305" key="2"/>
<organism>
    <name type="scientific">Mycobacterium tuberculosis (strain CDC 1551 / Oshkosh)</name>
    <dbReference type="NCBI Taxonomy" id="83331"/>
    <lineage>
        <taxon>Bacteria</taxon>
        <taxon>Bacillati</taxon>
        <taxon>Actinomycetota</taxon>
        <taxon>Actinomycetes</taxon>
        <taxon>Mycobacteriales</taxon>
        <taxon>Mycobacteriaceae</taxon>
        <taxon>Mycobacterium</taxon>
        <taxon>Mycobacterium tuberculosis complex</taxon>
    </lineage>
</organism>
<keyword id="KW-1185">Reference proteome</keyword>
<accession>P9WI44</accession>
<accession>L0T315</accession>
<accession>Q79FY8</accession>
<accession>Q8VKN6</accession>
<name>PPE03_MYCTO</name>
<dbReference type="EMBL" id="AE000516">
    <property type="protein sequence ID" value="AAK44516.1"/>
    <property type="status" value="ALT_INIT"/>
    <property type="molecule type" value="Genomic_DNA"/>
</dbReference>
<dbReference type="PIR" id="F70835">
    <property type="entry name" value="F70835"/>
</dbReference>
<dbReference type="RefSeq" id="WP_010950374.1">
    <property type="nucleotide sequence ID" value="NZ_KK341227.1"/>
</dbReference>
<dbReference type="SMR" id="P9WI44"/>
<dbReference type="KEGG" id="mtc:MT0292"/>
<dbReference type="PATRIC" id="fig|83331.31.peg.316"/>
<dbReference type="HOGENOM" id="CLU_000243_5_2_11"/>
<dbReference type="Proteomes" id="UP000001020">
    <property type="component" value="Chromosome"/>
</dbReference>
<dbReference type="GO" id="GO:0052572">
    <property type="term" value="P:response to host immune response"/>
    <property type="evidence" value="ECO:0007669"/>
    <property type="project" value="TreeGrafter"/>
</dbReference>
<dbReference type="FunFam" id="1.20.1260.20:FF:000001">
    <property type="entry name" value="PPE family protein PPE41"/>
    <property type="match status" value="1"/>
</dbReference>
<dbReference type="Gene3D" id="1.20.1260.20">
    <property type="entry name" value="PPE superfamily"/>
    <property type="match status" value="1"/>
</dbReference>
<dbReference type="InterPro" id="IPR043641">
    <property type="entry name" value="PPE-PPW_C"/>
</dbReference>
<dbReference type="InterPro" id="IPR000030">
    <property type="entry name" value="PPE_dom"/>
</dbReference>
<dbReference type="InterPro" id="IPR038332">
    <property type="entry name" value="PPE_sf"/>
</dbReference>
<dbReference type="PANTHER" id="PTHR46766">
    <property type="entry name" value="GLUTAMINE-RICH PROTEIN 2"/>
    <property type="match status" value="1"/>
</dbReference>
<dbReference type="PANTHER" id="PTHR46766:SF1">
    <property type="entry name" value="GLUTAMINE-RICH PROTEIN 2"/>
    <property type="match status" value="1"/>
</dbReference>
<dbReference type="Pfam" id="PF00823">
    <property type="entry name" value="PPE"/>
    <property type="match status" value="1"/>
</dbReference>
<dbReference type="Pfam" id="PF18878">
    <property type="entry name" value="PPE-PPW"/>
    <property type="match status" value="1"/>
</dbReference>
<dbReference type="SUPFAM" id="SSF140459">
    <property type="entry name" value="PE/PPE dimer-like"/>
    <property type="match status" value="1"/>
</dbReference>
<reference key="1">
    <citation type="journal article" date="2002" name="J. Bacteriol.">
        <title>Whole-genome comparison of Mycobacterium tuberculosis clinical and laboratory strains.</title>
        <authorList>
            <person name="Fleischmann R.D."/>
            <person name="Alland D."/>
            <person name="Eisen J.A."/>
            <person name="Carpenter L."/>
            <person name="White O."/>
            <person name="Peterson J.D."/>
            <person name="DeBoy R.T."/>
            <person name="Dodson R.J."/>
            <person name="Gwinn M.L."/>
            <person name="Haft D.H."/>
            <person name="Hickey E.K."/>
            <person name="Kolonay J.F."/>
            <person name="Nelson W.C."/>
            <person name="Umayam L.A."/>
            <person name="Ermolaeva M.D."/>
            <person name="Salzberg S.L."/>
            <person name="Delcher A."/>
            <person name="Utterback T.R."/>
            <person name="Weidman J.F."/>
            <person name="Khouri H.M."/>
            <person name="Gill J."/>
            <person name="Mikula A."/>
            <person name="Bishai W."/>
            <person name="Jacobs W.R. Jr."/>
            <person name="Venter J.C."/>
            <person name="Fraser C.M."/>
        </authorList>
    </citation>
    <scope>NUCLEOTIDE SEQUENCE [LARGE SCALE GENOMIC DNA]</scope>
    <source>
        <strain>CDC 1551 / Oshkosh</strain>
    </source>
</reference>
<proteinExistence type="inferred from homology"/>
<feature type="chain" id="PRO_0000428071" description="Uncharacterized PPE family protein PPE3">
    <location>
        <begin position="1"/>
        <end position="536"/>
    </location>
</feature>
<feature type="region of interest" description="Disordered" evidence="1">
    <location>
        <begin position="501"/>
        <end position="536"/>
    </location>
</feature>
<feature type="compositionally biased region" description="Basic and acidic residues" evidence="1">
    <location>
        <begin position="521"/>
        <end position="536"/>
    </location>
</feature>